<gene>
    <name evidence="1" type="primary">fabZ</name>
    <name type="ordered locus">Acid_6202</name>
</gene>
<name>FABZ_SOLUE</name>
<accession>Q01T92</accession>
<proteinExistence type="inferred from homology"/>
<keyword id="KW-0963">Cytoplasm</keyword>
<keyword id="KW-0441">Lipid A biosynthesis</keyword>
<keyword id="KW-0444">Lipid biosynthesis</keyword>
<keyword id="KW-0443">Lipid metabolism</keyword>
<keyword id="KW-0456">Lyase</keyword>
<dbReference type="EC" id="4.2.1.59" evidence="1"/>
<dbReference type="EMBL" id="CP000473">
    <property type="protein sequence ID" value="ABJ87128.1"/>
    <property type="molecule type" value="Genomic_DNA"/>
</dbReference>
<dbReference type="SMR" id="Q01T92"/>
<dbReference type="FunCoup" id="Q01T92">
    <property type="interactions" value="469"/>
</dbReference>
<dbReference type="STRING" id="234267.Acid_6202"/>
<dbReference type="KEGG" id="sus:Acid_6202"/>
<dbReference type="eggNOG" id="COG0764">
    <property type="taxonomic scope" value="Bacteria"/>
</dbReference>
<dbReference type="HOGENOM" id="CLU_078912_1_2_0"/>
<dbReference type="InParanoid" id="Q01T92"/>
<dbReference type="OrthoDB" id="9772788at2"/>
<dbReference type="GO" id="GO:0005737">
    <property type="term" value="C:cytoplasm"/>
    <property type="evidence" value="ECO:0007669"/>
    <property type="project" value="UniProtKB-SubCell"/>
</dbReference>
<dbReference type="GO" id="GO:0016020">
    <property type="term" value="C:membrane"/>
    <property type="evidence" value="ECO:0007669"/>
    <property type="project" value="GOC"/>
</dbReference>
<dbReference type="GO" id="GO:0019171">
    <property type="term" value="F:(3R)-hydroxyacyl-[acyl-carrier-protein] dehydratase activity"/>
    <property type="evidence" value="ECO:0007669"/>
    <property type="project" value="UniProtKB-EC"/>
</dbReference>
<dbReference type="GO" id="GO:0006633">
    <property type="term" value="P:fatty acid biosynthetic process"/>
    <property type="evidence" value="ECO:0007669"/>
    <property type="project" value="UniProtKB-UniRule"/>
</dbReference>
<dbReference type="GO" id="GO:0009245">
    <property type="term" value="P:lipid A biosynthetic process"/>
    <property type="evidence" value="ECO:0007669"/>
    <property type="project" value="UniProtKB-UniRule"/>
</dbReference>
<dbReference type="CDD" id="cd01288">
    <property type="entry name" value="FabZ"/>
    <property type="match status" value="1"/>
</dbReference>
<dbReference type="FunFam" id="3.10.129.10:FF:000001">
    <property type="entry name" value="3-hydroxyacyl-[acyl-carrier-protein] dehydratase FabZ"/>
    <property type="match status" value="1"/>
</dbReference>
<dbReference type="Gene3D" id="3.10.129.10">
    <property type="entry name" value="Hotdog Thioesterase"/>
    <property type="match status" value="1"/>
</dbReference>
<dbReference type="HAMAP" id="MF_00406">
    <property type="entry name" value="FabZ"/>
    <property type="match status" value="1"/>
</dbReference>
<dbReference type="InterPro" id="IPR013114">
    <property type="entry name" value="FabA_FabZ"/>
</dbReference>
<dbReference type="InterPro" id="IPR010084">
    <property type="entry name" value="FabZ"/>
</dbReference>
<dbReference type="InterPro" id="IPR029069">
    <property type="entry name" value="HotDog_dom_sf"/>
</dbReference>
<dbReference type="NCBIfam" id="TIGR01750">
    <property type="entry name" value="fabZ"/>
    <property type="match status" value="1"/>
</dbReference>
<dbReference type="NCBIfam" id="NF000582">
    <property type="entry name" value="PRK00006.1"/>
    <property type="match status" value="1"/>
</dbReference>
<dbReference type="PANTHER" id="PTHR30272">
    <property type="entry name" value="3-HYDROXYACYL-[ACYL-CARRIER-PROTEIN] DEHYDRATASE"/>
    <property type="match status" value="1"/>
</dbReference>
<dbReference type="PANTHER" id="PTHR30272:SF1">
    <property type="entry name" value="3-HYDROXYACYL-[ACYL-CARRIER-PROTEIN] DEHYDRATASE"/>
    <property type="match status" value="1"/>
</dbReference>
<dbReference type="Pfam" id="PF07977">
    <property type="entry name" value="FabA"/>
    <property type="match status" value="1"/>
</dbReference>
<dbReference type="SUPFAM" id="SSF54637">
    <property type="entry name" value="Thioesterase/thiol ester dehydrase-isomerase"/>
    <property type="match status" value="1"/>
</dbReference>
<organism>
    <name type="scientific">Solibacter usitatus (strain Ellin6076)</name>
    <dbReference type="NCBI Taxonomy" id="234267"/>
    <lineage>
        <taxon>Bacteria</taxon>
        <taxon>Pseudomonadati</taxon>
        <taxon>Acidobacteriota</taxon>
        <taxon>Terriglobia</taxon>
        <taxon>Bryobacterales</taxon>
        <taxon>Solibacteraceae</taxon>
        <taxon>Candidatus Solibacter</taxon>
    </lineage>
</organism>
<reference key="1">
    <citation type="journal article" date="2009" name="Appl. Environ. Microbiol.">
        <title>Three genomes from the phylum Acidobacteria provide insight into the lifestyles of these microorganisms in soils.</title>
        <authorList>
            <person name="Ward N.L."/>
            <person name="Challacombe J.F."/>
            <person name="Janssen P.H."/>
            <person name="Henrissat B."/>
            <person name="Coutinho P.M."/>
            <person name="Wu M."/>
            <person name="Xie G."/>
            <person name="Haft D.H."/>
            <person name="Sait M."/>
            <person name="Badger J."/>
            <person name="Barabote R.D."/>
            <person name="Bradley B."/>
            <person name="Brettin T.S."/>
            <person name="Brinkac L.M."/>
            <person name="Bruce D."/>
            <person name="Creasy T."/>
            <person name="Daugherty S.C."/>
            <person name="Davidsen T.M."/>
            <person name="DeBoy R.T."/>
            <person name="Detter J.C."/>
            <person name="Dodson R.J."/>
            <person name="Durkin A.S."/>
            <person name="Ganapathy A."/>
            <person name="Gwinn-Giglio M."/>
            <person name="Han C.S."/>
            <person name="Khouri H."/>
            <person name="Kiss H."/>
            <person name="Kothari S.P."/>
            <person name="Madupu R."/>
            <person name="Nelson K.E."/>
            <person name="Nelson W.C."/>
            <person name="Paulsen I."/>
            <person name="Penn K."/>
            <person name="Ren Q."/>
            <person name="Rosovitz M.J."/>
            <person name="Selengut J.D."/>
            <person name="Shrivastava S."/>
            <person name="Sullivan S.A."/>
            <person name="Tapia R."/>
            <person name="Thompson L.S."/>
            <person name="Watkins K.L."/>
            <person name="Yang Q."/>
            <person name="Yu C."/>
            <person name="Zafar N."/>
            <person name="Zhou L."/>
            <person name="Kuske C.R."/>
        </authorList>
    </citation>
    <scope>NUCLEOTIDE SEQUENCE [LARGE SCALE GENOMIC DNA]</scope>
    <source>
        <strain>Ellin6076</strain>
    </source>
</reference>
<evidence type="ECO:0000255" key="1">
    <source>
        <dbReference type="HAMAP-Rule" id="MF_00406"/>
    </source>
</evidence>
<sequence>MAILDINEIRAILPHRYPFLLVDRILEMETDRIVGIKNVTFNEPQFTGHFPDFPVMPGVMIVEAMAQTAGVLVLHSMPDRANKLVLLVAIENARFRKPVVPGDTLRMEMKIIKRKASVAKMAGIATVDGVVVAEAEVMCKLADKEEKPPAAPEIKVPAEAAV</sequence>
<protein>
    <recommendedName>
        <fullName evidence="1">3-hydroxyacyl-[acyl-carrier-protein] dehydratase FabZ</fullName>
        <ecNumber evidence="1">4.2.1.59</ecNumber>
    </recommendedName>
    <alternativeName>
        <fullName evidence="1">(3R)-hydroxymyristoyl-[acyl-carrier-protein] dehydratase</fullName>
        <shortName evidence="1">(3R)-hydroxymyristoyl-ACP dehydrase</shortName>
    </alternativeName>
    <alternativeName>
        <fullName evidence="1">Beta-hydroxyacyl-ACP dehydratase</fullName>
    </alternativeName>
</protein>
<feature type="chain" id="PRO_0000340803" description="3-hydroxyacyl-[acyl-carrier-protein] dehydratase FabZ">
    <location>
        <begin position="1"/>
        <end position="162"/>
    </location>
</feature>
<feature type="active site" evidence="1">
    <location>
        <position position="49"/>
    </location>
</feature>
<comment type="function">
    <text evidence="1">Involved in unsaturated fatty acids biosynthesis. Catalyzes the dehydration of short chain beta-hydroxyacyl-ACPs and long chain saturated and unsaturated beta-hydroxyacyl-ACPs.</text>
</comment>
<comment type="catalytic activity">
    <reaction evidence="1">
        <text>a (3R)-hydroxyacyl-[ACP] = a (2E)-enoyl-[ACP] + H2O</text>
        <dbReference type="Rhea" id="RHEA:13097"/>
        <dbReference type="Rhea" id="RHEA-COMP:9925"/>
        <dbReference type="Rhea" id="RHEA-COMP:9945"/>
        <dbReference type="ChEBI" id="CHEBI:15377"/>
        <dbReference type="ChEBI" id="CHEBI:78784"/>
        <dbReference type="ChEBI" id="CHEBI:78827"/>
        <dbReference type="EC" id="4.2.1.59"/>
    </reaction>
</comment>
<comment type="subcellular location">
    <subcellularLocation>
        <location evidence="1">Cytoplasm</location>
    </subcellularLocation>
</comment>
<comment type="similarity">
    <text evidence="1">Belongs to the thioester dehydratase family. FabZ subfamily.</text>
</comment>